<organism>
    <name type="scientific">Escherichia coli (strain K12 / DH10B)</name>
    <dbReference type="NCBI Taxonomy" id="316385"/>
    <lineage>
        <taxon>Bacteria</taxon>
        <taxon>Pseudomonadati</taxon>
        <taxon>Pseudomonadota</taxon>
        <taxon>Gammaproteobacteria</taxon>
        <taxon>Enterobacterales</taxon>
        <taxon>Enterobacteriaceae</taxon>
        <taxon>Escherichia</taxon>
    </lineage>
</organism>
<sequence>MDSQRNLLVIALLFVSFMIWQAWEQDKNPQPQAQQTTQTTTTAAGSAADQGVPASGQGKLISVKTDVLDLTINTRGGDVEQALLPAYPKELNSTQPFQLLETSPQFIYQAQSGLTGRDGPDNPANGPRPLYNVEKDAYVLAEGQNELQVPMTYTDAAGNTFTKTFVLKRGDYAVNVNYNVQNAGEKPLEISSFGQLKQSITLPPHLDTGSSNFALHTFRGAAYSTPDEKYEKYKFDTIADNENLNISSKGGWVAMLQQYFATAWIPHNDGTNNFYTANLGNGIAAIGYKSQPVLVQPGQTGAMNSTLWVGPEIQDKMAAVAPHLDLTVDYGWLWFISQPLFKLLKWIHSFVGNWGFSIIIITFIVRGIMYPLTKAQYTSMAKMRMLQPKIQAMRERLGDDKQRISQEMMALYKAEKVNPLGGCFPLLIQMPIFLALYYMLMGSVELRQAPFALWIHDLSAQDPYYILPILMGVTMFFIQKMSPTTVTDPMQQKIMTFMPVIFTVFFLWFPSGLVLYYIVSNLVTIIQQQLIYRGLEKRGLHSREKKKS</sequence>
<protein>
    <recommendedName>
        <fullName evidence="1">Membrane protein insertase YidC</fullName>
    </recommendedName>
    <alternativeName>
        <fullName evidence="1">Foldase YidC</fullName>
    </alternativeName>
    <alternativeName>
        <fullName evidence="1">Membrane integrase YidC</fullName>
    </alternativeName>
    <alternativeName>
        <fullName evidence="1">Membrane protein YidC</fullName>
    </alternativeName>
</protein>
<keyword id="KW-0997">Cell inner membrane</keyword>
<keyword id="KW-1003">Cell membrane</keyword>
<keyword id="KW-0143">Chaperone</keyword>
<keyword id="KW-0472">Membrane</keyword>
<keyword id="KW-0653">Protein transport</keyword>
<keyword id="KW-0812">Transmembrane</keyword>
<keyword id="KW-1133">Transmembrane helix</keyword>
<keyword id="KW-0813">Transport</keyword>
<gene>
    <name evidence="1" type="primary">yidC</name>
    <name type="ordered locus">ECDH10B_3892</name>
</gene>
<evidence type="ECO:0000255" key="1">
    <source>
        <dbReference type="HAMAP-Rule" id="MF_01810"/>
    </source>
</evidence>
<evidence type="ECO:0000256" key="2">
    <source>
        <dbReference type="SAM" id="MobiDB-lite"/>
    </source>
</evidence>
<proteinExistence type="inferred from homology"/>
<feature type="chain" id="PRO_1000187662" description="Membrane protein insertase YidC">
    <location>
        <begin position="1"/>
        <end position="548"/>
    </location>
</feature>
<feature type="transmembrane region" description="Helical" evidence="1">
    <location>
        <begin position="6"/>
        <end position="26"/>
    </location>
</feature>
<feature type="transmembrane region" description="Helical" evidence="1">
    <location>
        <begin position="350"/>
        <end position="370"/>
    </location>
</feature>
<feature type="transmembrane region" description="Helical" evidence="1">
    <location>
        <begin position="420"/>
        <end position="440"/>
    </location>
</feature>
<feature type="transmembrane region" description="Helical" evidence="1">
    <location>
        <begin position="458"/>
        <end position="478"/>
    </location>
</feature>
<feature type="transmembrane region" description="Helical" evidence="1">
    <location>
        <begin position="499"/>
        <end position="519"/>
    </location>
</feature>
<feature type="region of interest" description="Disordered" evidence="2">
    <location>
        <begin position="28"/>
        <end position="55"/>
    </location>
</feature>
<feature type="compositionally biased region" description="Low complexity" evidence="2">
    <location>
        <begin position="30"/>
        <end position="50"/>
    </location>
</feature>
<dbReference type="EMBL" id="CP000948">
    <property type="protein sequence ID" value="ACB04749.1"/>
    <property type="molecule type" value="Genomic_DNA"/>
</dbReference>
<dbReference type="RefSeq" id="WP_000378250.1">
    <property type="nucleotide sequence ID" value="NC_010473.1"/>
</dbReference>
<dbReference type="SMR" id="B1X9T4"/>
<dbReference type="GeneID" id="75173922"/>
<dbReference type="KEGG" id="ecd:ECDH10B_3892"/>
<dbReference type="HOGENOM" id="CLU_016535_3_0_6"/>
<dbReference type="GO" id="GO:0005886">
    <property type="term" value="C:plasma membrane"/>
    <property type="evidence" value="ECO:0007669"/>
    <property type="project" value="UniProtKB-SubCell"/>
</dbReference>
<dbReference type="GO" id="GO:0032977">
    <property type="term" value="F:membrane insertase activity"/>
    <property type="evidence" value="ECO:0007669"/>
    <property type="project" value="InterPro"/>
</dbReference>
<dbReference type="GO" id="GO:0051205">
    <property type="term" value="P:protein insertion into membrane"/>
    <property type="evidence" value="ECO:0007669"/>
    <property type="project" value="TreeGrafter"/>
</dbReference>
<dbReference type="GO" id="GO:0015031">
    <property type="term" value="P:protein transport"/>
    <property type="evidence" value="ECO:0007669"/>
    <property type="project" value="UniProtKB-KW"/>
</dbReference>
<dbReference type="CDD" id="cd20070">
    <property type="entry name" value="5TM_YidC_Alb3"/>
    <property type="match status" value="1"/>
</dbReference>
<dbReference type="CDD" id="cd19961">
    <property type="entry name" value="EcYidC-like_peri"/>
    <property type="match status" value="1"/>
</dbReference>
<dbReference type="FunFam" id="2.70.98.90:FF:000001">
    <property type="entry name" value="Membrane protein insertase YidC"/>
    <property type="match status" value="1"/>
</dbReference>
<dbReference type="Gene3D" id="2.70.98.90">
    <property type="match status" value="1"/>
</dbReference>
<dbReference type="HAMAP" id="MF_01810">
    <property type="entry name" value="YidC_type1"/>
    <property type="match status" value="1"/>
</dbReference>
<dbReference type="InterPro" id="IPR019998">
    <property type="entry name" value="Membr_insert_YidC"/>
</dbReference>
<dbReference type="InterPro" id="IPR028053">
    <property type="entry name" value="Membr_insert_YidC_N"/>
</dbReference>
<dbReference type="InterPro" id="IPR001708">
    <property type="entry name" value="YidC/ALB3/OXA1/COX18"/>
</dbReference>
<dbReference type="InterPro" id="IPR028055">
    <property type="entry name" value="YidC/Oxa/ALB_C"/>
</dbReference>
<dbReference type="InterPro" id="IPR047196">
    <property type="entry name" value="YidC_ALB_C"/>
</dbReference>
<dbReference type="InterPro" id="IPR038221">
    <property type="entry name" value="YidC_periplasmic_sf"/>
</dbReference>
<dbReference type="NCBIfam" id="NF002351">
    <property type="entry name" value="PRK01318.1-1"/>
    <property type="match status" value="1"/>
</dbReference>
<dbReference type="NCBIfam" id="NF002352">
    <property type="entry name" value="PRK01318.1-3"/>
    <property type="match status" value="1"/>
</dbReference>
<dbReference type="NCBIfam" id="NF002353">
    <property type="entry name" value="PRK01318.1-4"/>
    <property type="match status" value="1"/>
</dbReference>
<dbReference type="NCBIfam" id="TIGR03593">
    <property type="entry name" value="yidC_nterm"/>
    <property type="match status" value="1"/>
</dbReference>
<dbReference type="NCBIfam" id="TIGR03592">
    <property type="entry name" value="yidC_oxa1_cterm"/>
    <property type="match status" value="1"/>
</dbReference>
<dbReference type="PANTHER" id="PTHR12428:SF65">
    <property type="entry name" value="CYTOCHROME C OXIDASE ASSEMBLY PROTEIN COX18, MITOCHONDRIAL"/>
    <property type="match status" value="1"/>
</dbReference>
<dbReference type="PANTHER" id="PTHR12428">
    <property type="entry name" value="OXA1"/>
    <property type="match status" value="1"/>
</dbReference>
<dbReference type="Pfam" id="PF02096">
    <property type="entry name" value="60KD_IMP"/>
    <property type="match status" value="1"/>
</dbReference>
<dbReference type="Pfam" id="PF14849">
    <property type="entry name" value="YidC_periplas"/>
    <property type="match status" value="1"/>
</dbReference>
<dbReference type="PRINTS" id="PR00701">
    <property type="entry name" value="60KDINNERMP"/>
</dbReference>
<dbReference type="PRINTS" id="PR01900">
    <property type="entry name" value="YIDCPROTEIN"/>
</dbReference>
<accession>B1X9T4</accession>
<reference key="1">
    <citation type="journal article" date="2008" name="J. Bacteriol.">
        <title>The complete genome sequence of Escherichia coli DH10B: insights into the biology of a laboratory workhorse.</title>
        <authorList>
            <person name="Durfee T."/>
            <person name="Nelson R."/>
            <person name="Baldwin S."/>
            <person name="Plunkett G. III"/>
            <person name="Burland V."/>
            <person name="Mau B."/>
            <person name="Petrosino J.F."/>
            <person name="Qin X."/>
            <person name="Muzny D.M."/>
            <person name="Ayele M."/>
            <person name="Gibbs R.A."/>
            <person name="Csorgo B."/>
            <person name="Posfai G."/>
            <person name="Weinstock G.M."/>
            <person name="Blattner F.R."/>
        </authorList>
    </citation>
    <scope>NUCLEOTIDE SEQUENCE [LARGE SCALE GENOMIC DNA]</scope>
    <source>
        <strain>K12 / DH10B</strain>
    </source>
</reference>
<comment type="function">
    <text evidence="1">Required for the insertion and/or proper folding and/or complex formation of integral membrane proteins into the membrane. Involved in integration of membrane proteins that insert both dependently and independently of the Sec translocase complex, as well as at least some lipoproteins. Aids folding of multispanning membrane proteins.</text>
</comment>
<comment type="subunit">
    <text evidence="1">Interacts with the Sec translocase complex via SecD. Specifically interacts with transmembrane segments of nascent integral membrane proteins during membrane integration.</text>
</comment>
<comment type="subcellular location">
    <subcellularLocation>
        <location evidence="1">Cell inner membrane</location>
        <topology evidence="1">Multi-pass membrane protein</topology>
    </subcellularLocation>
</comment>
<comment type="similarity">
    <text evidence="1">Belongs to the OXA1/ALB3/YidC family. Type 1 subfamily.</text>
</comment>
<name>YIDC_ECODH</name>